<organism>
    <name type="scientific">Methylorubrum extorquens (strain PA1)</name>
    <name type="common">Methylobacterium extorquens</name>
    <dbReference type="NCBI Taxonomy" id="419610"/>
    <lineage>
        <taxon>Bacteria</taxon>
        <taxon>Pseudomonadati</taxon>
        <taxon>Pseudomonadota</taxon>
        <taxon>Alphaproteobacteria</taxon>
        <taxon>Hyphomicrobiales</taxon>
        <taxon>Methylobacteriaceae</taxon>
        <taxon>Methylorubrum</taxon>
    </lineage>
</organism>
<comment type="function">
    <text evidence="1">Phosphorolytic 3'-5' exoribonuclease that plays an important role in tRNA 3'-end maturation. Removes nucleotide residues following the 3'-CCA terminus of tRNAs; can also add nucleotides to the ends of RNA molecules by using nucleoside diphosphates as substrates, but this may not be physiologically important. Probably plays a role in initiation of 16S rRNA degradation (leading to ribosome degradation) during starvation.</text>
</comment>
<comment type="catalytic activity">
    <reaction evidence="1">
        <text>tRNA(n+1) + phosphate = tRNA(n) + a ribonucleoside 5'-diphosphate</text>
        <dbReference type="Rhea" id="RHEA:10628"/>
        <dbReference type="Rhea" id="RHEA-COMP:17343"/>
        <dbReference type="Rhea" id="RHEA-COMP:17344"/>
        <dbReference type="ChEBI" id="CHEBI:43474"/>
        <dbReference type="ChEBI" id="CHEBI:57930"/>
        <dbReference type="ChEBI" id="CHEBI:173114"/>
        <dbReference type="EC" id="2.7.7.56"/>
    </reaction>
</comment>
<comment type="subunit">
    <text evidence="1">Homohexameric ring arranged as a trimer of dimers.</text>
</comment>
<comment type="similarity">
    <text evidence="1">Belongs to the RNase PH family.</text>
</comment>
<name>RNPH_METEP</name>
<evidence type="ECO:0000255" key="1">
    <source>
        <dbReference type="HAMAP-Rule" id="MF_00564"/>
    </source>
</evidence>
<reference key="1">
    <citation type="submission" date="2007-12" db="EMBL/GenBank/DDBJ databases">
        <title>Complete sequence of Methylobacterium extorquens PA1.</title>
        <authorList>
            <consortium name="US DOE Joint Genome Institute"/>
            <person name="Copeland A."/>
            <person name="Lucas S."/>
            <person name="Lapidus A."/>
            <person name="Barry K."/>
            <person name="Glavina del Rio T."/>
            <person name="Dalin E."/>
            <person name="Tice H."/>
            <person name="Pitluck S."/>
            <person name="Saunders E."/>
            <person name="Brettin T."/>
            <person name="Bruce D."/>
            <person name="Detter J.C."/>
            <person name="Han C."/>
            <person name="Schmutz J."/>
            <person name="Larimer F."/>
            <person name="Land M."/>
            <person name="Hauser L."/>
            <person name="Kyrpides N."/>
            <person name="Kim E."/>
            <person name="Marx C."/>
            <person name="Richardson P."/>
        </authorList>
    </citation>
    <scope>NUCLEOTIDE SEQUENCE [LARGE SCALE GENOMIC DNA]</scope>
    <source>
        <strain>PA1</strain>
    </source>
</reference>
<dbReference type="EC" id="2.7.7.56" evidence="1"/>
<dbReference type="EMBL" id="CP000908">
    <property type="protein sequence ID" value="ABY28823.1"/>
    <property type="molecule type" value="Genomic_DNA"/>
</dbReference>
<dbReference type="RefSeq" id="WP_003604865.1">
    <property type="nucleotide sequence ID" value="NC_010172.1"/>
</dbReference>
<dbReference type="SMR" id="A9VZR7"/>
<dbReference type="KEGG" id="mex:Mext_0401"/>
<dbReference type="eggNOG" id="COG0689">
    <property type="taxonomic scope" value="Bacteria"/>
</dbReference>
<dbReference type="HOGENOM" id="CLU_050858_0_0_5"/>
<dbReference type="BioCyc" id="MEXT419610:MEXT_RS01990-MONOMER"/>
<dbReference type="GO" id="GO:0000175">
    <property type="term" value="F:3'-5'-RNA exonuclease activity"/>
    <property type="evidence" value="ECO:0007669"/>
    <property type="project" value="UniProtKB-UniRule"/>
</dbReference>
<dbReference type="GO" id="GO:0000049">
    <property type="term" value="F:tRNA binding"/>
    <property type="evidence" value="ECO:0007669"/>
    <property type="project" value="UniProtKB-UniRule"/>
</dbReference>
<dbReference type="GO" id="GO:0009022">
    <property type="term" value="F:tRNA nucleotidyltransferase activity"/>
    <property type="evidence" value="ECO:0007669"/>
    <property type="project" value="UniProtKB-UniRule"/>
</dbReference>
<dbReference type="GO" id="GO:0016075">
    <property type="term" value="P:rRNA catabolic process"/>
    <property type="evidence" value="ECO:0007669"/>
    <property type="project" value="UniProtKB-UniRule"/>
</dbReference>
<dbReference type="GO" id="GO:0006364">
    <property type="term" value="P:rRNA processing"/>
    <property type="evidence" value="ECO:0007669"/>
    <property type="project" value="UniProtKB-KW"/>
</dbReference>
<dbReference type="GO" id="GO:0008033">
    <property type="term" value="P:tRNA processing"/>
    <property type="evidence" value="ECO:0007669"/>
    <property type="project" value="UniProtKB-UniRule"/>
</dbReference>
<dbReference type="CDD" id="cd11362">
    <property type="entry name" value="RNase_PH_bact"/>
    <property type="match status" value="1"/>
</dbReference>
<dbReference type="FunFam" id="3.30.230.70:FF:000003">
    <property type="entry name" value="Ribonuclease PH"/>
    <property type="match status" value="1"/>
</dbReference>
<dbReference type="Gene3D" id="3.30.230.70">
    <property type="entry name" value="GHMP Kinase, N-terminal domain"/>
    <property type="match status" value="1"/>
</dbReference>
<dbReference type="HAMAP" id="MF_00564">
    <property type="entry name" value="RNase_PH"/>
    <property type="match status" value="1"/>
</dbReference>
<dbReference type="InterPro" id="IPR001247">
    <property type="entry name" value="ExoRNase_PH_dom1"/>
</dbReference>
<dbReference type="InterPro" id="IPR015847">
    <property type="entry name" value="ExoRNase_PH_dom2"/>
</dbReference>
<dbReference type="InterPro" id="IPR036345">
    <property type="entry name" value="ExoRNase_PH_dom2_sf"/>
</dbReference>
<dbReference type="InterPro" id="IPR027408">
    <property type="entry name" value="PNPase/RNase_PH_dom_sf"/>
</dbReference>
<dbReference type="InterPro" id="IPR020568">
    <property type="entry name" value="Ribosomal_Su5_D2-typ_SF"/>
</dbReference>
<dbReference type="InterPro" id="IPR050080">
    <property type="entry name" value="RNase_PH"/>
</dbReference>
<dbReference type="InterPro" id="IPR002381">
    <property type="entry name" value="RNase_PH_bac-type"/>
</dbReference>
<dbReference type="InterPro" id="IPR018336">
    <property type="entry name" value="RNase_PH_CS"/>
</dbReference>
<dbReference type="NCBIfam" id="TIGR01966">
    <property type="entry name" value="RNasePH"/>
    <property type="match status" value="1"/>
</dbReference>
<dbReference type="PANTHER" id="PTHR11953">
    <property type="entry name" value="EXOSOME COMPLEX COMPONENT"/>
    <property type="match status" value="1"/>
</dbReference>
<dbReference type="PANTHER" id="PTHR11953:SF0">
    <property type="entry name" value="EXOSOME COMPLEX COMPONENT RRP41"/>
    <property type="match status" value="1"/>
</dbReference>
<dbReference type="Pfam" id="PF01138">
    <property type="entry name" value="RNase_PH"/>
    <property type="match status" value="1"/>
</dbReference>
<dbReference type="Pfam" id="PF03725">
    <property type="entry name" value="RNase_PH_C"/>
    <property type="match status" value="1"/>
</dbReference>
<dbReference type="SUPFAM" id="SSF55666">
    <property type="entry name" value="Ribonuclease PH domain 2-like"/>
    <property type="match status" value="1"/>
</dbReference>
<dbReference type="SUPFAM" id="SSF54211">
    <property type="entry name" value="Ribosomal protein S5 domain 2-like"/>
    <property type="match status" value="1"/>
</dbReference>
<dbReference type="PROSITE" id="PS01277">
    <property type="entry name" value="RIBONUCLEASE_PH"/>
    <property type="match status" value="1"/>
</dbReference>
<accession>A9VZR7</accession>
<proteinExistence type="inferred from homology"/>
<gene>
    <name evidence="1" type="primary">rph</name>
    <name type="ordered locus">Mext_0401</name>
</gene>
<protein>
    <recommendedName>
        <fullName evidence="1">Ribonuclease PH</fullName>
        <shortName evidence="1">RNase PH</shortName>
        <ecNumber evidence="1">2.7.7.56</ecNumber>
    </recommendedName>
    <alternativeName>
        <fullName evidence="1">tRNA nucleotidyltransferase</fullName>
    </alternativeName>
</protein>
<keyword id="KW-0548">Nucleotidyltransferase</keyword>
<keyword id="KW-0694">RNA-binding</keyword>
<keyword id="KW-0698">rRNA processing</keyword>
<keyword id="KW-0808">Transferase</keyword>
<keyword id="KW-0819">tRNA processing</keyword>
<keyword id="KW-0820">tRNA-binding</keyword>
<feature type="chain" id="PRO_1000129349" description="Ribonuclease PH">
    <location>
        <begin position="1"/>
        <end position="237"/>
    </location>
</feature>
<feature type="binding site" evidence="1">
    <location>
        <position position="86"/>
    </location>
    <ligand>
        <name>phosphate</name>
        <dbReference type="ChEBI" id="CHEBI:43474"/>
        <note>substrate</note>
    </ligand>
</feature>
<feature type="binding site" evidence="1">
    <location>
        <begin position="124"/>
        <end position="126"/>
    </location>
    <ligand>
        <name>phosphate</name>
        <dbReference type="ChEBI" id="CHEBI:43474"/>
        <note>substrate</note>
    </ligand>
</feature>
<sequence>MRPSKRAADAMRDVTLERAVARYAEGSCLVTFGNTRVLCTASLEERGPPWLRGSGKGWVTAEYAMLPRATHERTRREVNSGKPSGRTQEIQRLIGRSLRAVTNLPALGERQITVDCDVIQADGGTRTASITGAWVALHDCFAWMRARSIISVDPLKDHVAAVSCGIYKGQPVLDLDYAEDSAAETDANFVVTGKGGIVEVQGTAEMEPFTDEQFLELLRLAKGGVAGLVELQRKAIA</sequence>